<comment type="function">
    <text evidence="1">This protein binds specifically to 23S rRNA.</text>
</comment>
<comment type="function">
    <text evidence="1">The globular domain of the protein is located near the polypeptide exit tunnel on the outside of the subunit, while an extended beta-hairpin is found that lines the wall of the exit tunnel in the center of the 70S ribosome.</text>
</comment>
<comment type="subunit">
    <text evidence="1">Part of the 50S ribosomal subunit.</text>
</comment>
<comment type="subcellular location">
    <subcellularLocation>
        <location>Plastid</location>
        <location>Chloroplast</location>
    </subcellularLocation>
</comment>
<comment type="similarity">
    <text evidence="2">Belongs to the universal ribosomal protein uL22 family.</text>
</comment>
<sequence>MLKKKKTEVYALGEHISMSADKARRVINQIRGRSYEETLMILELMPYRACYPILKLIYSAAANASYNMGSSEANLVISKAEVNGGTTVKKLKPRARGRSFPIKRSTCHITIVMKDISLDDEYVEMYSLKKTRWKKKSTAMPYRDMYNSGGLWDKK</sequence>
<gene>
    <name type="primary">rpl22</name>
</gene>
<reference key="1">
    <citation type="journal article" date="2006" name="Mol. Genet. Genomics">
        <title>The chloroplast genome of Nicotiana sylvestris and Nicotiana tomentosiformis: complete sequencing confirms that the Nicotiana sylvestris progenitor is the maternal genome donor of Nicotiana tabacum.</title>
        <authorList>
            <person name="Yukawa M."/>
            <person name="Tsudzuki T."/>
            <person name="Sugiura M."/>
        </authorList>
    </citation>
    <scope>NUCLEOTIDE SEQUENCE [LARGE SCALE GENOMIC DNA]</scope>
</reference>
<keyword id="KW-0150">Chloroplast</keyword>
<keyword id="KW-0934">Plastid</keyword>
<keyword id="KW-1185">Reference proteome</keyword>
<keyword id="KW-0687">Ribonucleoprotein</keyword>
<keyword id="KW-0689">Ribosomal protein</keyword>
<keyword id="KW-0694">RNA-binding</keyword>
<keyword id="KW-0699">rRNA-binding</keyword>
<organism>
    <name type="scientific">Nicotiana sylvestris</name>
    <name type="common">Wood tobacco</name>
    <name type="synonym">South American tobacco</name>
    <dbReference type="NCBI Taxonomy" id="4096"/>
    <lineage>
        <taxon>Eukaryota</taxon>
        <taxon>Viridiplantae</taxon>
        <taxon>Streptophyta</taxon>
        <taxon>Embryophyta</taxon>
        <taxon>Tracheophyta</taxon>
        <taxon>Spermatophyta</taxon>
        <taxon>Magnoliopsida</taxon>
        <taxon>eudicotyledons</taxon>
        <taxon>Gunneridae</taxon>
        <taxon>Pentapetalae</taxon>
        <taxon>asterids</taxon>
        <taxon>lamiids</taxon>
        <taxon>Solanales</taxon>
        <taxon>Solanaceae</taxon>
        <taxon>Nicotianoideae</taxon>
        <taxon>Nicotianeae</taxon>
        <taxon>Nicotiana</taxon>
    </lineage>
</organism>
<name>RK22_NICSY</name>
<proteinExistence type="inferred from homology"/>
<geneLocation type="chloroplast"/>
<accession>Q3C1L5</accession>
<feature type="chain" id="PRO_0000243241" description="Large ribosomal subunit protein uL22c">
    <location>
        <begin position="1"/>
        <end position="155"/>
    </location>
</feature>
<evidence type="ECO:0000250" key="1"/>
<evidence type="ECO:0000305" key="2"/>
<dbReference type="EMBL" id="AB237912">
    <property type="protein sequence ID" value="BAE46694.1"/>
    <property type="molecule type" value="Genomic_DNA"/>
</dbReference>
<dbReference type="RefSeq" id="YP_358718.1">
    <property type="nucleotide sequence ID" value="NC_007500.1"/>
</dbReference>
<dbReference type="SMR" id="Q3C1L5"/>
<dbReference type="GeneID" id="3735083"/>
<dbReference type="KEGG" id="nsy:3735083"/>
<dbReference type="OrthoDB" id="19132at4085"/>
<dbReference type="Proteomes" id="UP000189701">
    <property type="component" value="Chloroplast Pltd"/>
</dbReference>
<dbReference type="GO" id="GO:0009507">
    <property type="term" value="C:chloroplast"/>
    <property type="evidence" value="ECO:0007669"/>
    <property type="project" value="UniProtKB-SubCell"/>
</dbReference>
<dbReference type="GO" id="GO:0015934">
    <property type="term" value="C:large ribosomal subunit"/>
    <property type="evidence" value="ECO:0007669"/>
    <property type="project" value="InterPro"/>
</dbReference>
<dbReference type="GO" id="GO:0019843">
    <property type="term" value="F:rRNA binding"/>
    <property type="evidence" value="ECO:0007669"/>
    <property type="project" value="UniProtKB-UniRule"/>
</dbReference>
<dbReference type="GO" id="GO:0003735">
    <property type="term" value="F:structural constituent of ribosome"/>
    <property type="evidence" value="ECO:0007669"/>
    <property type="project" value="InterPro"/>
</dbReference>
<dbReference type="GO" id="GO:0006412">
    <property type="term" value="P:translation"/>
    <property type="evidence" value="ECO:0007669"/>
    <property type="project" value="UniProtKB-UniRule"/>
</dbReference>
<dbReference type="CDD" id="cd00336">
    <property type="entry name" value="Ribosomal_L22"/>
    <property type="match status" value="1"/>
</dbReference>
<dbReference type="FunFam" id="3.90.470.10:FF:000006">
    <property type="entry name" value="50S ribosomal protein L22, chloroplastic"/>
    <property type="match status" value="1"/>
</dbReference>
<dbReference type="Gene3D" id="3.90.470.10">
    <property type="entry name" value="Ribosomal protein L22/L17"/>
    <property type="match status" value="1"/>
</dbReference>
<dbReference type="HAMAP" id="MF_01331_B">
    <property type="entry name" value="Ribosomal_uL22_B"/>
    <property type="match status" value="1"/>
</dbReference>
<dbReference type="InterPro" id="IPR001063">
    <property type="entry name" value="Ribosomal_uL22"/>
</dbReference>
<dbReference type="InterPro" id="IPR005727">
    <property type="entry name" value="Ribosomal_uL22_bac/chlpt-type"/>
</dbReference>
<dbReference type="InterPro" id="IPR047867">
    <property type="entry name" value="Ribosomal_uL22_bac/org-type"/>
</dbReference>
<dbReference type="InterPro" id="IPR018260">
    <property type="entry name" value="Ribosomal_uL22_CS"/>
</dbReference>
<dbReference type="InterPro" id="IPR036394">
    <property type="entry name" value="Ribosomal_uL22_sf"/>
</dbReference>
<dbReference type="NCBIfam" id="TIGR01044">
    <property type="entry name" value="rplV_bact"/>
    <property type="match status" value="1"/>
</dbReference>
<dbReference type="PANTHER" id="PTHR13501">
    <property type="entry name" value="CHLOROPLAST 50S RIBOSOMAL PROTEIN L22-RELATED"/>
    <property type="match status" value="1"/>
</dbReference>
<dbReference type="PANTHER" id="PTHR13501:SF10">
    <property type="entry name" value="LARGE RIBOSOMAL SUBUNIT PROTEIN UL22M"/>
    <property type="match status" value="1"/>
</dbReference>
<dbReference type="Pfam" id="PF00237">
    <property type="entry name" value="Ribosomal_L22"/>
    <property type="match status" value="1"/>
</dbReference>
<dbReference type="SUPFAM" id="SSF54843">
    <property type="entry name" value="Ribosomal protein L22"/>
    <property type="match status" value="1"/>
</dbReference>
<dbReference type="PROSITE" id="PS00464">
    <property type="entry name" value="RIBOSOMAL_L22"/>
    <property type="match status" value="1"/>
</dbReference>
<protein>
    <recommendedName>
        <fullName evidence="2">Large ribosomal subunit protein uL22c</fullName>
    </recommendedName>
    <alternativeName>
        <fullName>50S ribosomal protein L22, chloroplastic</fullName>
    </alternativeName>
</protein>